<name>PTN9_RAT</name>
<protein>
    <recommendedName>
        <fullName>Tyrosine-protein phosphatase non-receptor type 9</fullName>
        <ecNumber>3.1.3.48</ecNumber>
    </recommendedName>
</protein>
<feature type="chain" id="PRO_0000094766" description="Tyrosine-protein phosphatase non-receptor type 9">
    <location>
        <begin position="1"/>
        <end position="593"/>
    </location>
</feature>
<feature type="domain" description="CRAL-TRIO" evidence="3">
    <location>
        <begin position="84"/>
        <end position="243"/>
    </location>
</feature>
<feature type="domain" description="Tyrosine-protein phosphatase" evidence="4">
    <location>
        <begin position="303"/>
        <end position="574"/>
    </location>
</feature>
<feature type="region of interest" description="Disordered" evidence="6">
    <location>
        <begin position="1"/>
        <end position="21"/>
    </location>
</feature>
<feature type="active site" description="Phosphocysteine intermediate" evidence="4 5">
    <location>
        <position position="515"/>
    </location>
</feature>
<feature type="binding site" evidence="1">
    <location>
        <position position="470"/>
    </location>
    <ligand>
        <name>substrate</name>
    </ligand>
</feature>
<feature type="binding site" evidence="1">
    <location>
        <begin position="515"/>
        <end position="521"/>
    </location>
    <ligand>
        <name>substrate</name>
    </ligand>
</feature>
<feature type="binding site" evidence="1">
    <location>
        <position position="559"/>
    </location>
    <ligand>
        <name>substrate</name>
    </ligand>
</feature>
<feature type="modified residue" description="N-acetylmethionine" evidence="2">
    <location>
        <position position="1"/>
    </location>
</feature>
<organism>
    <name type="scientific">Rattus norvegicus</name>
    <name type="common">Rat</name>
    <dbReference type="NCBI Taxonomy" id="10116"/>
    <lineage>
        <taxon>Eukaryota</taxon>
        <taxon>Metazoa</taxon>
        <taxon>Chordata</taxon>
        <taxon>Craniata</taxon>
        <taxon>Vertebrata</taxon>
        <taxon>Euteleostomi</taxon>
        <taxon>Mammalia</taxon>
        <taxon>Eutheria</taxon>
        <taxon>Euarchontoglires</taxon>
        <taxon>Glires</taxon>
        <taxon>Rodentia</taxon>
        <taxon>Myomorpha</taxon>
        <taxon>Muroidea</taxon>
        <taxon>Muridae</taxon>
        <taxon>Murinae</taxon>
        <taxon>Rattus</taxon>
    </lineage>
</organism>
<reference key="1">
    <citation type="journal article" date="2004" name="Genome Res.">
        <title>The status, quality, and expansion of the NIH full-length cDNA project: the Mammalian Gene Collection (MGC).</title>
        <authorList>
            <consortium name="The MGC Project Team"/>
        </authorList>
    </citation>
    <scope>NUCLEOTIDE SEQUENCE [LARGE SCALE MRNA]</scope>
    <source>
        <tissue>Testis</tissue>
    </source>
</reference>
<reference key="2">
    <citation type="submission" date="2002-08" db="EMBL/GenBank/DDBJ databases">
        <authorList>
            <person name="Heneberg P."/>
            <person name="Draber P."/>
        </authorList>
    </citation>
    <scope>NUCLEOTIDE SEQUENCE [MRNA] OF 532-593</scope>
    <source>
        <strain>Wistar</strain>
    </source>
</reference>
<gene>
    <name type="primary">Ptpn9</name>
</gene>
<proteinExistence type="evidence at transcript level"/>
<sequence>MEPATAPRPDMAPELTPEEEQATKQFLEEINKWTVQYNVSPLSWNVAVKFLMARKFDVLRAVELFHCYRETRRKEGIVKLKPHEEPLRSEILSGKFTILNVRDPTGASIALFTARLHHPHKSVQHVVLQALFYLLDRAVDSFETQRNGLVFIYDMCGSNYANFELDLGKKVLNLLKGAFPARLKKVLIVGAPIWFRVPYSIISLLLKDKVRERIQILKTSEVTQHLPRECLPENLGGYIKIDLATWNFQFLPQVNGHPDPFDEIILFSLPPALDWDSVHVPGPHAMTIQELVDYVNTRQKQGIYEEYEDIRRENPVGTFHCSMSPGNLEKNRYGDVPCLDQTRVKLTKRSGHTQTDYINASFMDGYKQKNAYIGTQGPLENTYRDFWLMVWEQKVLVIVMTTRFEEGGRRKCGQYWPLEKDSRIQFGFLTVTNLGVENMNHYKKTTLEIHNTEERQKRQVTHFQFLSWPDYGVPSSAASLIDFLRVVRSQQSMAVGSLGARSKGQCPEPPIVVHCSAGIGRTGTFCSLDICLAQLEELGTLNVFQTVSRMRTQRAFSIQTPEQYYFCYKAILEFAEREGMVPSGHSLLAMDGQ</sequence>
<dbReference type="EC" id="3.1.3.48"/>
<dbReference type="EMBL" id="BC082041">
    <property type="protein sequence ID" value="AAH82041.1"/>
    <property type="molecule type" value="mRNA"/>
</dbReference>
<dbReference type="EMBL" id="AF520784">
    <property type="protein sequence ID" value="AAM98071.1"/>
    <property type="molecule type" value="mRNA"/>
</dbReference>
<dbReference type="RefSeq" id="NP_001013058.1">
    <property type="nucleotide sequence ID" value="NM_001013040.1"/>
</dbReference>
<dbReference type="SMR" id="Q641Z2"/>
<dbReference type="FunCoup" id="Q641Z2">
    <property type="interactions" value="4134"/>
</dbReference>
<dbReference type="IntAct" id="Q641Z2">
    <property type="interactions" value="2"/>
</dbReference>
<dbReference type="MINT" id="Q641Z2"/>
<dbReference type="STRING" id="10116.ENSRNOP00000023831"/>
<dbReference type="iPTMnet" id="Q641Z2"/>
<dbReference type="PhosphoSitePlus" id="Q641Z2"/>
<dbReference type="jPOST" id="Q641Z2"/>
<dbReference type="PaxDb" id="10116-ENSRNOP00000023831"/>
<dbReference type="Ensembl" id="ENSRNOT00000023831.7">
    <property type="protein sequence ID" value="ENSRNOP00000023831.5"/>
    <property type="gene ID" value="ENSRNOG00000017600.7"/>
</dbReference>
<dbReference type="GeneID" id="266611"/>
<dbReference type="KEGG" id="rno:266611"/>
<dbReference type="UCSC" id="RGD:628726">
    <property type="organism name" value="rat"/>
</dbReference>
<dbReference type="AGR" id="RGD:628726"/>
<dbReference type="CTD" id="5780"/>
<dbReference type="RGD" id="628726">
    <property type="gene designation" value="Ptpn9"/>
</dbReference>
<dbReference type="eggNOG" id="ENOG502QR81">
    <property type="taxonomic scope" value="Eukaryota"/>
</dbReference>
<dbReference type="GeneTree" id="ENSGT00940000157447"/>
<dbReference type="InParanoid" id="Q641Z2"/>
<dbReference type="OMA" id="DLASWNF"/>
<dbReference type="OrthoDB" id="10051650at2759"/>
<dbReference type="PhylomeDB" id="Q641Z2"/>
<dbReference type="TreeFam" id="TF351975"/>
<dbReference type="PRO" id="PR:Q641Z2"/>
<dbReference type="Proteomes" id="UP000002494">
    <property type="component" value="Chromosome 8"/>
</dbReference>
<dbReference type="Bgee" id="ENSRNOG00000017600">
    <property type="expression patterns" value="Expressed in stomach and 19 other cell types or tissues"/>
</dbReference>
<dbReference type="ExpressionAtlas" id="Q641Z2">
    <property type="expression patterns" value="baseline and differential"/>
</dbReference>
<dbReference type="GO" id="GO:0005737">
    <property type="term" value="C:cytoplasm"/>
    <property type="evidence" value="ECO:0000266"/>
    <property type="project" value="RGD"/>
</dbReference>
<dbReference type="GO" id="GO:0044306">
    <property type="term" value="C:neuron projection terminus"/>
    <property type="evidence" value="ECO:0000266"/>
    <property type="project" value="RGD"/>
</dbReference>
<dbReference type="GO" id="GO:0004725">
    <property type="term" value="F:protein tyrosine phosphatase activity"/>
    <property type="evidence" value="ECO:0000314"/>
    <property type="project" value="RGD"/>
</dbReference>
<dbReference type="GO" id="GO:0010977">
    <property type="term" value="P:negative regulation of neuron projection development"/>
    <property type="evidence" value="ECO:0000266"/>
    <property type="project" value="RGD"/>
</dbReference>
<dbReference type="GO" id="GO:1903078">
    <property type="term" value="P:positive regulation of protein localization to plasma membrane"/>
    <property type="evidence" value="ECO:0000266"/>
    <property type="project" value="RGD"/>
</dbReference>
<dbReference type="GO" id="GO:0007165">
    <property type="term" value="P:signal transduction"/>
    <property type="evidence" value="ECO:0000318"/>
    <property type="project" value="GO_Central"/>
</dbReference>
<dbReference type="CDD" id="cd14543">
    <property type="entry name" value="PTPc-N9"/>
    <property type="match status" value="1"/>
</dbReference>
<dbReference type="CDD" id="cd00170">
    <property type="entry name" value="SEC14"/>
    <property type="match status" value="1"/>
</dbReference>
<dbReference type="FunFam" id="3.40.525.10:FF:000005">
    <property type="entry name" value="Tyrosine-protein phosphatase non-receptor type 9"/>
    <property type="match status" value="1"/>
</dbReference>
<dbReference type="FunFam" id="3.90.190.10:FF:000026">
    <property type="entry name" value="tyrosine-protein phosphatase non-receptor type 9"/>
    <property type="match status" value="1"/>
</dbReference>
<dbReference type="Gene3D" id="3.40.525.10">
    <property type="entry name" value="CRAL-TRIO lipid binding domain"/>
    <property type="match status" value="1"/>
</dbReference>
<dbReference type="Gene3D" id="1.10.8.20">
    <property type="entry name" value="N-terminal domain of phosphatidylinositol transfer protein sec14p"/>
    <property type="match status" value="1"/>
</dbReference>
<dbReference type="Gene3D" id="3.90.190.10">
    <property type="entry name" value="Protein tyrosine phosphatase superfamily"/>
    <property type="match status" value="1"/>
</dbReference>
<dbReference type="InterPro" id="IPR001251">
    <property type="entry name" value="CRAL-TRIO_dom"/>
</dbReference>
<dbReference type="InterPro" id="IPR036865">
    <property type="entry name" value="CRAL-TRIO_dom_sf"/>
</dbReference>
<dbReference type="InterPro" id="IPR036273">
    <property type="entry name" value="CRAL/TRIO_N_dom_sf"/>
</dbReference>
<dbReference type="InterPro" id="IPR029021">
    <property type="entry name" value="Prot-tyrosine_phosphatase-like"/>
</dbReference>
<dbReference type="InterPro" id="IPR050348">
    <property type="entry name" value="Protein-Tyr_Phosphatase"/>
</dbReference>
<dbReference type="InterPro" id="IPR000242">
    <property type="entry name" value="PTP_cat"/>
</dbReference>
<dbReference type="InterPro" id="IPR016130">
    <property type="entry name" value="Tyr_Pase_AS"/>
</dbReference>
<dbReference type="InterPro" id="IPR003595">
    <property type="entry name" value="Tyr_Pase_cat"/>
</dbReference>
<dbReference type="InterPro" id="IPR000387">
    <property type="entry name" value="Tyr_Pase_dom"/>
</dbReference>
<dbReference type="PANTHER" id="PTHR19134">
    <property type="entry name" value="RECEPTOR-TYPE TYROSINE-PROTEIN PHOSPHATASE"/>
    <property type="match status" value="1"/>
</dbReference>
<dbReference type="PANTHER" id="PTHR19134:SF285">
    <property type="entry name" value="TYROSINE-PROTEIN PHOSPHATASE NON-RECEPTOR TYPE 9"/>
    <property type="match status" value="1"/>
</dbReference>
<dbReference type="Pfam" id="PF00650">
    <property type="entry name" value="CRAL_TRIO"/>
    <property type="match status" value="1"/>
</dbReference>
<dbReference type="Pfam" id="PF00102">
    <property type="entry name" value="Y_phosphatase"/>
    <property type="match status" value="1"/>
</dbReference>
<dbReference type="PRINTS" id="PR00700">
    <property type="entry name" value="PRTYPHPHTASE"/>
</dbReference>
<dbReference type="SMART" id="SM00194">
    <property type="entry name" value="PTPc"/>
    <property type="match status" value="1"/>
</dbReference>
<dbReference type="SMART" id="SM00404">
    <property type="entry name" value="PTPc_motif"/>
    <property type="match status" value="1"/>
</dbReference>
<dbReference type="SMART" id="SM00516">
    <property type="entry name" value="SEC14"/>
    <property type="match status" value="1"/>
</dbReference>
<dbReference type="SUPFAM" id="SSF52799">
    <property type="entry name" value="(Phosphotyrosine protein) phosphatases II"/>
    <property type="match status" value="1"/>
</dbReference>
<dbReference type="SUPFAM" id="SSF52087">
    <property type="entry name" value="CRAL/TRIO domain"/>
    <property type="match status" value="1"/>
</dbReference>
<dbReference type="SUPFAM" id="SSF46938">
    <property type="entry name" value="CRAL/TRIO N-terminal domain"/>
    <property type="match status" value="1"/>
</dbReference>
<dbReference type="PROSITE" id="PS50191">
    <property type="entry name" value="CRAL_TRIO"/>
    <property type="match status" value="1"/>
</dbReference>
<dbReference type="PROSITE" id="PS00383">
    <property type="entry name" value="TYR_PHOSPHATASE_1"/>
    <property type="match status" value="1"/>
</dbReference>
<dbReference type="PROSITE" id="PS50056">
    <property type="entry name" value="TYR_PHOSPHATASE_2"/>
    <property type="match status" value="1"/>
</dbReference>
<dbReference type="PROSITE" id="PS50055">
    <property type="entry name" value="TYR_PHOSPHATASE_PTP"/>
    <property type="match status" value="1"/>
</dbReference>
<evidence type="ECO:0000250" key="1"/>
<evidence type="ECO:0000250" key="2">
    <source>
        <dbReference type="UniProtKB" id="P43378"/>
    </source>
</evidence>
<evidence type="ECO:0000255" key="3">
    <source>
        <dbReference type="PROSITE-ProRule" id="PRU00056"/>
    </source>
</evidence>
<evidence type="ECO:0000255" key="4">
    <source>
        <dbReference type="PROSITE-ProRule" id="PRU00160"/>
    </source>
</evidence>
<evidence type="ECO:0000255" key="5">
    <source>
        <dbReference type="PROSITE-ProRule" id="PRU10044"/>
    </source>
</evidence>
<evidence type="ECO:0000256" key="6">
    <source>
        <dbReference type="SAM" id="MobiDB-lite"/>
    </source>
</evidence>
<evidence type="ECO:0000305" key="7"/>
<keyword id="KW-0007">Acetylation</keyword>
<keyword id="KW-0963">Cytoplasm</keyword>
<keyword id="KW-0378">Hydrolase</keyword>
<keyword id="KW-0904">Protein phosphatase</keyword>
<keyword id="KW-1185">Reference proteome</keyword>
<comment type="function">
    <text evidence="1">Protein-tyrosine phosphatase that could participate in the transfer of hydrophobic ligands or in functions of the Golgi apparatus.</text>
</comment>
<comment type="catalytic activity">
    <reaction evidence="5">
        <text>O-phospho-L-tyrosyl-[protein] + H2O = L-tyrosyl-[protein] + phosphate</text>
        <dbReference type="Rhea" id="RHEA:10684"/>
        <dbReference type="Rhea" id="RHEA-COMP:10136"/>
        <dbReference type="Rhea" id="RHEA-COMP:20101"/>
        <dbReference type="ChEBI" id="CHEBI:15377"/>
        <dbReference type="ChEBI" id="CHEBI:43474"/>
        <dbReference type="ChEBI" id="CHEBI:46858"/>
        <dbReference type="ChEBI" id="CHEBI:61978"/>
        <dbReference type="EC" id="3.1.3.48"/>
    </reaction>
</comment>
<comment type="subcellular location">
    <subcellularLocation>
        <location evidence="7">Cytoplasm</location>
    </subcellularLocation>
</comment>
<comment type="similarity">
    <text evidence="7">Belongs to the protein-tyrosine phosphatase family. Non-receptor class 3 subfamily.</text>
</comment>
<accession>Q641Z2</accession>
<accession>Q8K3Y9</accession>